<sequence>METLGLPLPLFEKILFRLDPISLVMMKCTRRSFNSHISEDPYFKSKYLSGVRSGLLHISSFGSKNLFCNPFGDSSSSRHHDFLDITTRILGSCSGLLLLFIDGLCVANPLTKRYRFLNYSKSMFLSRVDRWGILNFDLPSEKMNRLGLAVDQITQRFKVVCMNETETSDPDETMYQFEILTGDSCWRLSATTITCSASVLIMDKKPVYFDGSVHWLRKDGSILSFNPETEQARLIPIKFPLELCAVANKFLFSATEKELAFISATEDLINVYALENALIDPKWALVKQIKNGVSENKKIRYWNVAAYDGKYLVLWEMYKDIYNGVVHGYDLRANKWGVLGSVPSWCDCSHSFYNFTPSPFSSTIELNKKVDVRMITTVRDDYNVRMITMVRDDKHISTLKKIMKLTDEISPCAKSRWH</sequence>
<protein>
    <recommendedName>
        <fullName>Putative F-box protein At1g20795</fullName>
    </recommendedName>
</protein>
<keyword id="KW-1185">Reference proteome</keyword>
<accession>Q9LM74</accession>
<name>FB13_ARATH</name>
<reference key="1">
    <citation type="journal article" date="2000" name="Nature">
        <title>Sequence and analysis of chromosome 1 of the plant Arabidopsis thaliana.</title>
        <authorList>
            <person name="Theologis A."/>
            <person name="Ecker J.R."/>
            <person name="Palm C.J."/>
            <person name="Federspiel N.A."/>
            <person name="Kaul S."/>
            <person name="White O."/>
            <person name="Alonso J."/>
            <person name="Altafi H."/>
            <person name="Araujo R."/>
            <person name="Bowman C.L."/>
            <person name="Brooks S.Y."/>
            <person name="Buehler E."/>
            <person name="Chan A."/>
            <person name="Chao Q."/>
            <person name="Chen H."/>
            <person name="Cheuk R.F."/>
            <person name="Chin C.W."/>
            <person name="Chung M.K."/>
            <person name="Conn L."/>
            <person name="Conway A.B."/>
            <person name="Conway A.R."/>
            <person name="Creasy T.H."/>
            <person name="Dewar K."/>
            <person name="Dunn P."/>
            <person name="Etgu P."/>
            <person name="Feldblyum T.V."/>
            <person name="Feng J.-D."/>
            <person name="Fong B."/>
            <person name="Fujii C.Y."/>
            <person name="Gill J.E."/>
            <person name="Goldsmith A.D."/>
            <person name="Haas B."/>
            <person name="Hansen N.F."/>
            <person name="Hughes B."/>
            <person name="Huizar L."/>
            <person name="Hunter J.L."/>
            <person name="Jenkins J."/>
            <person name="Johnson-Hopson C."/>
            <person name="Khan S."/>
            <person name="Khaykin E."/>
            <person name="Kim C.J."/>
            <person name="Koo H.L."/>
            <person name="Kremenetskaia I."/>
            <person name="Kurtz D.B."/>
            <person name="Kwan A."/>
            <person name="Lam B."/>
            <person name="Langin-Hooper S."/>
            <person name="Lee A."/>
            <person name="Lee J.M."/>
            <person name="Lenz C.A."/>
            <person name="Li J.H."/>
            <person name="Li Y.-P."/>
            <person name="Lin X."/>
            <person name="Liu S.X."/>
            <person name="Liu Z.A."/>
            <person name="Luros J.S."/>
            <person name="Maiti R."/>
            <person name="Marziali A."/>
            <person name="Militscher J."/>
            <person name="Miranda M."/>
            <person name="Nguyen M."/>
            <person name="Nierman W.C."/>
            <person name="Osborne B.I."/>
            <person name="Pai G."/>
            <person name="Peterson J."/>
            <person name="Pham P.K."/>
            <person name="Rizzo M."/>
            <person name="Rooney T."/>
            <person name="Rowley D."/>
            <person name="Sakano H."/>
            <person name="Salzberg S.L."/>
            <person name="Schwartz J.R."/>
            <person name="Shinn P."/>
            <person name="Southwick A.M."/>
            <person name="Sun H."/>
            <person name="Tallon L.J."/>
            <person name="Tambunga G."/>
            <person name="Toriumi M.J."/>
            <person name="Town C.D."/>
            <person name="Utterback T."/>
            <person name="Van Aken S."/>
            <person name="Vaysberg M."/>
            <person name="Vysotskaia V.S."/>
            <person name="Walker M."/>
            <person name="Wu D."/>
            <person name="Yu G."/>
            <person name="Fraser C.M."/>
            <person name="Venter J.C."/>
            <person name="Davis R.W."/>
        </authorList>
    </citation>
    <scope>NUCLEOTIDE SEQUENCE [LARGE SCALE GENOMIC DNA]</scope>
    <source>
        <strain>cv. Columbia</strain>
    </source>
</reference>
<reference key="2">
    <citation type="journal article" date="2017" name="Plant J.">
        <title>Araport11: a complete reannotation of the Arabidopsis thaliana reference genome.</title>
        <authorList>
            <person name="Cheng C.Y."/>
            <person name="Krishnakumar V."/>
            <person name="Chan A.P."/>
            <person name="Thibaud-Nissen F."/>
            <person name="Schobel S."/>
            <person name="Town C.D."/>
        </authorList>
    </citation>
    <scope>GENOME REANNOTATION</scope>
    <source>
        <strain>cv. Columbia</strain>
    </source>
</reference>
<dbReference type="EMBL" id="AC069251">
    <property type="protein sequence ID" value="AAF80630.1"/>
    <property type="molecule type" value="Genomic_DNA"/>
</dbReference>
<dbReference type="EMBL" id="CP002684">
    <property type="protein sequence ID" value="AEE30023.1"/>
    <property type="molecule type" value="Genomic_DNA"/>
</dbReference>
<dbReference type="RefSeq" id="NP_849692.1">
    <property type="nucleotide sequence ID" value="NM_179361.1"/>
</dbReference>
<dbReference type="SMR" id="Q9LM74"/>
<dbReference type="iPTMnet" id="Q9LM74"/>
<dbReference type="PaxDb" id="3702-AT1G20795.1"/>
<dbReference type="EnsemblPlants" id="AT1G20795.1">
    <property type="protein sequence ID" value="AT1G20795.1"/>
    <property type="gene ID" value="AT1G20795"/>
</dbReference>
<dbReference type="GeneID" id="838670"/>
<dbReference type="Gramene" id="AT1G20795.1">
    <property type="protein sequence ID" value="AT1G20795.1"/>
    <property type="gene ID" value="AT1G20795"/>
</dbReference>
<dbReference type="KEGG" id="ath:AT1G20795"/>
<dbReference type="Araport" id="AT1G20795"/>
<dbReference type="TAIR" id="AT1G20795"/>
<dbReference type="eggNOG" id="ENOG502STF4">
    <property type="taxonomic scope" value="Eukaryota"/>
</dbReference>
<dbReference type="HOGENOM" id="CLU_061894_0_0_1"/>
<dbReference type="InParanoid" id="Q9LM74"/>
<dbReference type="OMA" id="TMYQFEI"/>
<dbReference type="OrthoDB" id="1094363at2759"/>
<dbReference type="PhylomeDB" id="Q9LM74"/>
<dbReference type="PRO" id="PR:Q9LM74"/>
<dbReference type="Proteomes" id="UP000006548">
    <property type="component" value="Chromosome 1"/>
</dbReference>
<dbReference type="ExpressionAtlas" id="Q9LM74">
    <property type="expression patterns" value="baseline and differential"/>
</dbReference>
<dbReference type="InterPro" id="IPR017451">
    <property type="entry name" value="F-box-assoc_interact_dom"/>
</dbReference>
<dbReference type="InterPro" id="IPR036047">
    <property type="entry name" value="F-box-like_dom_sf"/>
</dbReference>
<dbReference type="InterPro" id="IPR001810">
    <property type="entry name" value="F-box_dom"/>
</dbReference>
<dbReference type="InterPro" id="IPR050796">
    <property type="entry name" value="SCF_F-box_component"/>
</dbReference>
<dbReference type="NCBIfam" id="TIGR01640">
    <property type="entry name" value="F_box_assoc_1"/>
    <property type="match status" value="1"/>
</dbReference>
<dbReference type="PANTHER" id="PTHR31672">
    <property type="entry name" value="BNACNNG10540D PROTEIN"/>
    <property type="match status" value="1"/>
</dbReference>
<dbReference type="PANTHER" id="PTHR31672:SF13">
    <property type="entry name" value="F-BOX PROTEIN CPR30-LIKE"/>
    <property type="match status" value="1"/>
</dbReference>
<dbReference type="SUPFAM" id="SSF81383">
    <property type="entry name" value="F-box domain"/>
    <property type="match status" value="1"/>
</dbReference>
<dbReference type="PROSITE" id="PS50181">
    <property type="entry name" value="FBOX"/>
    <property type="match status" value="1"/>
</dbReference>
<feature type="chain" id="PRO_0000283292" description="Putative F-box protein At1g20795">
    <location>
        <begin position="1"/>
        <end position="418"/>
    </location>
</feature>
<feature type="domain" description="F-box" evidence="1">
    <location>
        <begin position="1"/>
        <end position="46"/>
    </location>
</feature>
<gene>
    <name type="ordered locus">At1g20795</name>
    <name type="ORF">F2D10.29</name>
</gene>
<evidence type="ECO:0000255" key="1">
    <source>
        <dbReference type="PROSITE-ProRule" id="PRU00080"/>
    </source>
</evidence>
<proteinExistence type="predicted"/>
<organism>
    <name type="scientific">Arabidopsis thaliana</name>
    <name type="common">Mouse-ear cress</name>
    <dbReference type="NCBI Taxonomy" id="3702"/>
    <lineage>
        <taxon>Eukaryota</taxon>
        <taxon>Viridiplantae</taxon>
        <taxon>Streptophyta</taxon>
        <taxon>Embryophyta</taxon>
        <taxon>Tracheophyta</taxon>
        <taxon>Spermatophyta</taxon>
        <taxon>Magnoliopsida</taxon>
        <taxon>eudicotyledons</taxon>
        <taxon>Gunneridae</taxon>
        <taxon>Pentapetalae</taxon>
        <taxon>rosids</taxon>
        <taxon>malvids</taxon>
        <taxon>Brassicales</taxon>
        <taxon>Brassicaceae</taxon>
        <taxon>Camelineae</taxon>
        <taxon>Arabidopsis</taxon>
    </lineage>
</organism>